<protein>
    <recommendedName>
        <fullName evidence="1">3-deoxy-manno-octulosonate cytidylyltransferase</fullName>
        <ecNumber evidence="1">2.7.7.38</ecNumber>
    </recommendedName>
    <alternativeName>
        <fullName evidence="1">CMP-2-keto-3-deoxyoctulosonic acid synthase</fullName>
        <shortName evidence="1">CKS</shortName>
        <shortName evidence="1">CMP-KDO synthase</shortName>
    </alternativeName>
</protein>
<accession>A9CKP8</accession>
<name>KDSB_AGRFC</name>
<gene>
    <name evidence="1" type="primary">kdsB</name>
    <name type="ordered locus">Atu0100</name>
    <name type="ORF">AGR_C_152</name>
</gene>
<evidence type="ECO:0000255" key="1">
    <source>
        <dbReference type="HAMAP-Rule" id="MF_00057"/>
    </source>
</evidence>
<sequence>MKNRDFEKAVVLIPARMASTRLPGKPLADIGGRPMIVQVALRAREAGAERIVVAVDDEQVFAAVQNAGFDVMMTRGDHQSGSDRIFEALQKADPYGKAEYVINVQGDLPTIEAETIRASLRPMENAAVDIATLTVEITDEEEKTNPNVVKVVGSPLSETRLRALYFTRTTAPYGDGPLYHHIGLYTYRRAALETFVRLPPSPLELRERLEQLRALEAGMRIDAEIVRSVPLGVDTPHDLEKARKILAGRTL</sequence>
<proteinExistence type="inferred from homology"/>
<dbReference type="EC" id="2.7.7.38" evidence="1"/>
<dbReference type="EMBL" id="AE007869">
    <property type="protein sequence ID" value="AAK85920.1"/>
    <property type="molecule type" value="Genomic_DNA"/>
</dbReference>
<dbReference type="PIR" id="AG2588">
    <property type="entry name" value="AG2588"/>
</dbReference>
<dbReference type="PIR" id="G97370">
    <property type="entry name" value="G97370"/>
</dbReference>
<dbReference type="RefSeq" id="NP_353135.1">
    <property type="nucleotide sequence ID" value="NC_003062.2"/>
</dbReference>
<dbReference type="RefSeq" id="WP_010970654.1">
    <property type="nucleotide sequence ID" value="NC_003062.2"/>
</dbReference>
<dbReference type="SMR" id="A9CKP8"/>
<dbReference type="STRING" id="176299.Atu0100"/>
<dbReference type="EnsemblBacteria" id="AAK85920">
    <property type="protein sequence ID" value="AAK85920"/>
    <property type="gene ID" value="Atu0100"/>
</dbReference>
<dbReference type="GeneID" id="1132138"/>
<dbReference type="KEGG" id="atu:Atu0100"/>
<dbReference type="PATRIC" id="fig|176299.10.peg.94"/>
<dbReference type="eggNOG" id="COG1212">
    <property type="taxonomic scope" value="Bacteria"/>
</dbReference>
<dbReference type="HOGENOM" id="CLU_065038_0_1_5"/>
<dbReference type="OrthoDB" id="9815559at2"/>
<dbReference type="PhylomeDB" id="A9CKP8"/>
<dbReference type="BioCyc" id="AGRO:ATU0100-MONOMER"/>
<dbReference type="UniPathway" id="UPA00030"/>
<dbReference type="UniPathway" id="UPA00358">
    <property type="reaction ID" value="UER00476"/>
</dbReference>
<dbReference type="Proteomes" id="UP000000813">
    <property type="component" value="Chromosome circular"/>
</dbReference>
<dbReference type="GO" id="GO:0005829">
    <property type="term" value="C:cytosol"/>
    <property type="evidence" value="ECO:0007669"/>
    <property type="project" value="TreeGrafter"/>
</dbReference>
<dbReference type="GO" id="GO:0008690">
    <property type="term" value="F:3-deoxy-manno-octulosonate cytidylyltransferase activity"/>
    <property type="evidence" value="ECO:0007669"/>
    <property type="project" value="UniProtKB-UniRule"/>
</dbReference>
<dbReference type="GO" id="GO:0033468">
    <property type="term" value="P:CMP-keto-3-deoxy-D-manno-octulosonic acid biosynthetic process"/>
    <property type="evidence" value="ECO:0007669"/>
    <property type="project" value="UniProtKB-UniRule"/>
</dbReference>
<dbReference type="GO" id="GO:0009103">
    <property type="term" value="P:lipopolysaccharide biosynthetic process"/>
    <property type="evidence" value="ECO:0007669"/>
    <property type="project" value="UniProtKB-UniRule"/>
</dbReference>
<dbReference type="CDD" id="cd02517">
    <property type="entry name" value="CMP-KDO-Synthetase"/>
    <property type="match status" value="1"/>
</dbReference>
<dbReference type="Gene3D" id="3.90.550.10">
    <property type="entry name" value="Spore Coat Polysaccharide Biosynthesis Protein SpsA, Chain A"/>
    <property type="match status" value="1"/>
</dbReference>
<dbReference type="HAMAP" id="MF_00057">
    <property type="entry name" value="KdsB"/>
    <property type="match status" value="1"/>
</dbReference>
<dbReference type="InterPro" id="IPR003329">
    <property type="entry name" value="Cytidylyl_trans"/>
</dbReference>
<dbReference type="InterPro" id="IPR004528">
    <property type="entry name" value="KdsB"/>
</dbReference>
<dbReference type="InterPro" id="IPR029044">
    <property type="entry name" value="Nucleotide-diphossugar_trans"/>
</dbReference>
<dbReference type="NCBIfam" id="TIGR00466">
    <property type="entry name" value="kdsB"/>
    <property type="match status" value="1"/>
</dbReference>
<dbReference type="NCBIfam" id="NF003948">
    <property type="entry name" value="PRK05450.1-1"/>
    <property type="match status" value="1"/>
</dbReference>
<dbReference type="NCBIfam" id="NF003952">
    <property type="entry name" value="PRK05450.1-5"/>
    <property type="match status" value="1"/>
</dbReference>
<dbReference type="PANTHER" id="PTHR42866">
    <property type="entry name" value="3-DEOXY-MANNO-OCTULOSONATE CYTIDYLYLTRANSFERASE"/>
    <property type="match status" value="1"/>
</dbReference>
<dbReference type="PANTHER" id="PTHR42866:SF2">
    <property type="entry name" value="3-DEOXY-MANNO-OCTULOSONATE CYTIDYLYLTRANSFERASE, MITOCHONDRIAL"/>
    <property type="match status" value="1"/>
</dbReference>
<dbReference type="Pfam" id="PF02348">
    <property type="entry name" value="CTP_transf_3"/>
    <property type="match status" value="1"/>
</dbReference>
<dbReference type="SUPFAM" id="SSF53448">
    <property type="entry name" value="Nucleotide-diphospho-sugar transferases"/>
    <property type="match status" value="1"/>
</dbReference>
<keyword id="KW-0963">Cytoplasm</keyword>
<keyword id="KW-0448">Lipopolysaccharide biosynthesis</keyword>
<keyword id="KW-0548">Nucleotidyltransferase</keyword>
<keyword id="KW-1185">Reference proteome</keyword>
<keyword id="KW-0808">Transferase</keyword>
<comment type="function">
    <text evidence="1">Activates KDO (a required 8-carbon sugar) for incorporation into bacterial lipopolysaccharide in Gram-negative bacteria.</text>
</comment>
<comment type="catalytic activity">
    <reaction evidence="1">
        <text>3-deoxy-alpha-D-manno-oct-2-ulosonate + CTP = CMP-3-deoxy-beta-D-manno-octulosonate + diphosphate</text>
        <dbReference type="Rhea" id="RHEA:23448"/>
        <dbReference type="ChEBI" id="CHEBI:33019"/>
        <dbReference type="ChEBI" id="CHEBI:37563"/>
        <dbReference type="ChEBI" id="CHEBI:85986"/>
        <dbReference type="ChEBI" id="CHEBI:85987"/>
        <dbReference type="EC" id="2.7.7.38"/>
    </reaction>
</comment>
<comment type="pathway">
    <text evidence="1">Nucleotide-sugar biosynthesis; CMP-3-deoxy-D-manno-octulosonate biosynthesis; CMP-3-deoxy-D-manno-octulosonate from 3-deoxy-D-manno-octulosonate and CTP: step 1/1.</text>
</comment>
<comment type="pathway">
    <text evidence="1">Bacterial outer membrane biogenesis; lipopolysaccharide biosynthesis.</text>
</comment>
<comment type="subcellular location">
    <subcellularLocation>
        <location evidence="1">Cytoplasm</location>
    </subcellularLocation>
</comment>
<comment type="similarity">
    <text evidence="1">Belongs to the KdsB family.</text>
</comment>
<organism>
    <name type="scientific">Agrobacterium fabrum (strain C58 / ATCC 33970)</name>
    <name type="common">Agrobacterium tumefaciens (strain C58)</name>
    <dbReference type="NCBI Taxonomy" id="176299"/>
    <lineage>
        <taxon>Bacteria</taxon>
        <taxon>Pseudomonadati</taxon>
        <taxon>Pseudomonadota</taxon>
        <taxon>Alphaproteobacteria</taxon>
        <taxon>Hyphomicrobiales</taxon>
        <taxon>Rhizobiaceae</taxon>
        <taxon>Rhizobium/Agrobacterium group</taxon>
        <taxon>Agrobacterium</taxon>
        <taxon>Agrobacterium tumefaciens complex</taxon>
    </lineage>
</organism>
<feature type="chain" id="PRO_0000369993" description="3-deoxy-manno-octulosonate cytidylyltransferase">
    <location>
        <begin position="1"/>
        <end position="251"/>
    </location>
</feature>
<reference key="1">
    <citation type="journal article" date="2001" name="Science">
        <title>The genome of the natural genetic engineer Agrobacterium tumefaciens C58.</title>
        <authorList>
            <person name="Wood D.W."/>
            <person name="Setubal J.C."/>
            <person name="Kaul R."/>
            <person name="Monks D.E."/>
            <person name="Kitajima J.P."/>
            <person name="Okura V.K."/>
            <person name="Zhou Y."/>
            <person name="Chen L."/>
            <person name="Wood G.E."/>
            <person name="Almeida N.F. Jr."/>
            <person name="Woo L."/>
            <person name="Chen Y."/>
            <person name="Paulsen I.T."/>
            <person name="Eisen J.A."/>
            <person name="Karp P.D."/>
            <person name="Bovee D. Sr."/>
            <person name="Chapman P."/>
            <person name="Clendenning J."/>
            <person name="Deatherage G."/>
            <person name="Gillet W."/>
            <person name="Grant C."/>
            <person name="Kutyavin T."/>
            <person name="Levy R."/>
            <person name="Li M.-J."/>
            <person name="McClelland E."/>
            <person name="Palmieri A."/>
            <person name="Raymond C."/>
            <person name="Rouse G."/>
            <person name="Saenphimmachak C."/>
            <person name="Wu Z."/>
            <person name="Romero P."/>
            <person name="Gordon D."/>
            <person name="Zhang S."/>
            <person name="Yoo H."/>
            <person name="Tao Y."/>
            <person name="Biddle P."/>
            <person name="Jung M."/>
            <person name="Krespan W."/>
            <person name="Perry M."/>
            <person name="Gordon-Kamm B."/>
            <person name="Liao L."/>
            <person name="Kim S."/>
            <person name="Hendrick C."/>
            <person name="Zhao Z.-Y."/>
            <person name="Dolan M."/>
            <person name="Chumley F."/>
            <person name="Tingey S.V."/>
            <person name="Tomb J.-F."/>
            <person name="Gordon M.P."/>
            <person name="Olson M.V."/>
            <person name="Nester E.W."/>
        </authorList>
    </citation>
    <scope>NUCLEOTIDE SEQUENCE [LARGE SCALE GENOMIC DNA]</scope>
    <source>
        <strain>C58 / ATCC 33970</strain>
    </source>
</reference>
<reference key="2">
    <citation type="journal article" date="2001" name="Science">
        <title>Genome sequence of the plant pathogen and biotechnology agent Agrobacterium tumefaciens C58.</title>
        <authorList>
            <person name="Goodner B."/>
            <person name="Hinkle G."/>
            <person name="Gattung S."/>
            <person name="Miller N."/>
            <person name="Blanchard M."/>
            <person name="Qurollo B."/>
            <person name="Goldman B.S."/>
            <person name="Cao Y."/>
            <person name="Askenazi M."/>
            <person name="Halling C."/>
            <person name="Mullin L."/>
            <person name="Houmiel K."/>
            <person name="Gordon J."/>
            <person name="Vaudin M."/>
            <person name="Iartchouk O."/>
            <person name="Epp A."/>
            <person name="Liu F."/>
            <person name="Wollam C."/>
            <person name="Allinger M."/>
            <person name="Doughty D."/>
            <person name="Scott C."/>
            <person name="Lappas C."/>
            <person name="Markelz B."/>
            <person name="Flanagan C."/>
            <person name="Crowell C."/>
            <person name="Gurson J."/>
            <person name="Lomo C."/>
            <person name="Sear C."/>
            <person name="Strub G."/>
            <person name="Cielo C."/>
            <person name="Slater S."/>
        </authorList>
    </citation>
    <scope>NUCLEOTIDE SEQUENCE [LARGE SCALE GENOMIC DNA]</scope>
    <source>
        <strain>C58 / ATCC 33970</strain>
    </source>
</reference>